<proteinExistence type="evidence at protein level"/>
<sequence length="356" mass="40878">MSTRPQPDWYYHRHPYASTPLAEGEEPQLLPIQDQGNHKKSKIWMAYKAPIVRWYKNAMLVKDNFWKDLESSHQIIWYPYKGISESVGNSDYLHLFFLIFGYYLLNLLLIVAFTSILAWSLLVCIYLPFLGLFALPLAYMQTILISTTLCNSMVKGTDFVLFTRIYGVTFARKGLTELSEACETISFTPFVYRRSHRLGGLFSKRFYLVSLPQFFIFFFWYIFIAFMFLLLLLVPIVGPITINMLPFSPGMGFYYFEPYFVDVLHLDSRKLSKVYYKGFAKWLLYSISSGLLESIPILGGLFIGTNAVGASLWIVKEIKDRDQPAVPPSPPAEPEEPTVGSYAPPIQQSIAHINPP</sequence>
<protein>
    <recommendedName>
        <fullName evidence="10">Outer spore wall protein LDS2</fullName>
    </recommendedName>
    <alternativeName>
        <fullName evidence="8">Lipid droplets in sporulation protein 2</fullName>
    </alternativeName>
</protein>
<gene>
    <name evidence="8" type="primary">LDS2</name>
    <name evidence="11" type="ordered locus">YOL047C</name>
</gene>
<dbReference type="EMBL" id="Z74789">
    <property type="protein sequence ID" value="CAA99052.1"/>
    <property type="status" value="ALT_SEQ"/>
    <property type="molecule type" value="Genomic_DNA"/>
</dbReference>
<dbReference type="EMBL" id="BK006948">
    <property type="protein sequence ID" value="DAA10736.1"/>
    <property type="molecule type" value="Genomic_DNA"/>
</dbReference>
<dbReference type="PIR" id="S66732">
    <property type="entry name" value="S66732"/>
</dbReference>
<dbReference type="RefSeq" id="NP_014595.2">
    <property type="nucleotide sequence ID" value="NM_001183301.1"/>
</dbReference>
<dbReference type="BioGRID" id="34356">
    <property type="interactions" value="97"/>
</dbReference>
<dbReference type="FunCoup" id="Q08218">
    <property type="interactions" value="51"/>
</dbReference>
<dbReference type="IntAct" id="Q08218">
    <property type="interactions" value="1"/>
</dbReference>
<dbReference type="STRING" id="4932.YOL047C"/>
<dbReference type="TCDB" id="2.A.121.2.5">
    <property type="family name" value="the sulfate transporter (cysz) family"/>
</dbReference>
<dbReference type="GlyGen" id="Q08218">
    <property type="glycosylation" value="1 site"/>
</dbReference>
<dbReference type="PaxDb" id="4932-YOL047C"/>
<dbReference type="PeptideAtlas" id="Q08218"/>
<dbReference type="EnsemblFungi" id="YOL047C_mRNA">
    <property type="protein sequence ID" value="YOL047C"/>
    <property type="gene ID" value="YOL047C"/>
</dbReference>
<dbReference type="GeneID" id="854110"/>
<dbReference type="KEGG" id="sce:YOL047C"/>
<dbReference type="AGR" id="SGD:S000005407"/>
<dbReference type="SGD" id="S000005407">
    <property type="gene designation" value="LDS2"/>
</dbReference>
<dbReference type="VEuPathDB" id="FungiDB:YOL047C"/>
<dbReference type="HOGENOM" id="CLU_066715_0_0_1"/>
<dbReference type="InParanoid" id="Q08218"/>
<dbReference type="OrthoDB" id="4061312at2759"/>
<dbReference type="BioCyc" id="YEAST:G3O-33460-MONOMER"/>
<dbReference type="BioGRID-ORCS" id="854110">
    <property type="hits" value="6 hits in 10 CRISPR screens"/>
</dbReference>
<dbReference type="PRO" id="PR:Q08218"/>
<dbReference type="Proteomes" id="UP000002311">
    <property type="component" value="Chromosome XV"/>
</dbReference>
<dbReference type="RNAct" id="Q08218">
    <property type="molecule type" value="protein"/>
</dbReference>
<dbReference type="GO" id="GO:0005619">
    <property type="term" value="C:ascospore wall"/>
    <property type="evidence" value="ECO:0000314"/>
    <property type="project" value="SGD"/>
</dbReference>
<dbReference type="GO" id="GO:0005633">
    <property type="term" value="C:ascus lipid droplet"/>
    <property type="evidence" value="ECO:0000314"/>
    <property type="project" value="SGD"/>
</dbReference>
<dbReference type="GO" id="GO:0005737">
    <property type="term" value="C:cytoplasm"/>
    <property type="evidence" value="ECO:0007005"/>
    <property type="project" value="SGD"/>
</dbReference>
<dbReference type="GO" id="GO:0005811">
    <property type="term" value="C:lipid droplet"/>
    <property type="evidence" value="ECO:0007005"/>
    <property type="project" value="SGD"/>
</dbReference>
<dbReference type="GO" id="GO:0005628">
    <property type="term" value="C:prospore membrane"/>
    <property type="evidence" value="ECO:0000314"/>
    <property type="project" value="SGD"/>
</dbReference>
<dbReference type="GO" id="GO:0030476">
    <property type="term" value="P:ascospore wall assembly"/>
    <property type="evidence" value="ECO:0000316"/>
    <property type="project" value="SGD"/>
</dbReference>
<dbReference type="InterPro" id="IPR052786">
    <property type="entry name" value="Spore_wall_assembly"/>
</dbReference>
<dbReference type="PANTHER" id="PTHR34292">
    <property type="entry name" value="OUTER SPORE WALL PROTEIN LDS1"/>
    <property type="match status" value="1"/>
</dbReference>
<dbReference type="PANTHER" id="PTHR34292:SF3">
    <property type="entry name" value="OUTER SPORE WALL PROTEIN LDS2-RELATED"/>
    <property type="match status" value="1"/>
</dbReference>
<feature type="chain" id="PRO_0000235923" description="Outer spore wall protein LDS2">
    <location>
        <begin position="1"/>
        <end position="356"/>
    </location>
</feature>
<feature type="topological domain" description="Cytoplasmic" evidence="1">
    <location>
        <begin position="1"/>
        <end position="92"/>
    </location>
</feature>
<feature type="transmembrane region" description="Helical" evidence="2">
    <location>
        <begin position="93"/>
        <end position="113"/>
    </location>
</feature>
<feature type="topological domain" description="Extracellular" evidence="1">
    <location>
        <begin position="114"/>
        <end position="115"/>
    </location>
</feature>
<feature type="transmembrane region" description="Helical" evidence="2">
    <location>
        <begin position="116"/>
        <end position="136"/>
    </location>
</feature>
<feature type="topological domain" description="Cytoplasmic" evidence="1">
    <location>
        <begin position="137"/>
        <end position="213"/>
    </location>
</feature>
<feature type="transmembrane region" description="Helical" evidence="2">
    <location>
        <begin position="214"/>
        <end position="234"/>
    </location>
</feature>
<feature type="topological domain" description="Extracellular" evidence="1">
    <location>
        <begin position="235"/>
        <end position="294"/>
    </location>
</feature>
<feature type="transmembrane region" description="Helical" evidence="2">
    <location>
        <begin position="295"/>
        <end position="315"/>
    </location>
</feature>
<feature type="topological domain" description="Cytoplasmic" evidence="1">
    <location>
        <begin position="316"/>
        <end position="356"/>
    </location>
</feature>
<feature type="region of interest" description="Disordered" evidence="3">
    <location>
        <begin position="322"/>
        <end position="356"/>
    </location>
</feature>
<feature type="compositionally biased region" description="Polar residues" evidence="3">
    <location>
        <begin position="346"/>
        <end position="356"/>
    </location>
</feature>
<organism>
    <name type="scientific">Saccharomyces cerevisiae (strain ATCC 204508 / S288c)</name>
    <name type="common">Baker's yeast</name>
    <dbReference type="NCBI Taxonomy" id="559292"/>
    <lineage>
        <taxon>Eukaryota</taxon>
        <taxon>Fungi</taxon>
        <taxon>Dikarya</taxon>
        <taxon>Ascomycota</taxon>
        <taxon>Saccharomycotina</taxon>
        <taxon>Saccharomycetes</taxon>
        <taxon>Saccharomycetales</taxon>
        <taxon>Saccharomycetaceae</taxon>
        <taxon>Saccharomyces</taxon>
    </lineage>
</organism>
<comment type="function">
    <text evidence="6">Involved in spore wall assembly.</text>
</comment>
<comment type="subcellular location">
    <subcellularLocation>
        <location evidence="6">Prospore membrane</location>
        <topology evidence="2">Multi-pass membrane protein</topology>
    </subcellularLocation>
    <subcellularLocation>
        <location evidence="4 6 7">Lipid droplet</location>
    </subcellularLocation>
    <subcellularLocation>
        <location evidence="6">Spore wall</location>
    </subcellularLocation>
    <text evidence="6 7">Localizes to the ascal side of growing prospore membranes in mid-meiosis II and to the spore wall in post-meiotic cells. Localizes to a specific subset of lipid droplets associated with the exterior surface of the spore throughout spore wall formation.</text>
</comment>
<comment type="disruption phenotype">
    <text evidence="6">A combined deletion of the LDS proteins RRT8, LDS1 and LDS2 fails to incorporate dityrosine and another yet uncharacterized component in the outer spore wall.</text>
</comment>
<comment type="miscellaneous">
    <text evidence="5">Present with 155 molecules/cell in log phase SD medium.</text>
</comment>
<comment type="similarity">
    <text evidence="9">Belongs to the LDS family.</text>
</comment>
<comment type="sequence caution" evidence="9">
    <conflict type="erroneous gene model prediction">
        <sequence resource="EMBL-CDS" id="CAA99052"/>
    </conflict>
</comment>
<evidence type="ECO:0000250" key="1">
    <source>
        <dbReference type="UniProtKB" id="P31379"/>
    </source>
</evidence>
<evidence type="ECO:0000255" key="2"/>
<evidence type="ECO:0000256" key="3">
    <source>
        <dbReference type="SAM" id="MobiDB-lite"/>
    </source>
</evidence>
<evidence type="ECO:0000269" key="4">
    <source>
    </source>
</evidence>
<evidence type="ECO:0000269" key="5">
    <source>
    </source>
</evidence>
<evidence type="ECO:0000269" key="6">
    <source>
    </source>
</evidence>
<evidence type="ECO:0000269" key="7">
    <source>
    </source>
</evidence>
<evidence type="ECO:0000303" key="8">
    <source>
    </source>
</evidence>
<evidence type="ECO:0000305" key="9"/>
<evidence type="ECO:0000305" key="10">
    <source>
    </source>
</evidence>
<evidence type="ECO:0000312" key="11">
    <source>
        <dbReference type="SGD" id="S000005407"/>
    </source>
</evidence>
<reference key="1">
    <citation type="journal article" date="1997" name="Nature">
        <title>The nucleotide sequence of Saccharomyces cerevisiae chromosome XV.</title>
        <authorList>
            <person name="Dujon B."/>
            <person name="Albermann K."/>
            <person name="Aldea M."/>
            <person name="Alexandraki D."/>
            <person name="Ansorge W."/>
            <person name="Arino J."/>
            <person name="Benes V."/>
            <person name="Bohn C."/>
            <person name="Bolotin-Fukuhara M."/>
            <person name="Bordonne R."/>
            <person name="Boyer J."/>
            <person name="Camasses A."/>
            <person name="Casamayor A."/>
            <person name="Casas C."/>
            <person name="Cheret G."/>
            <person name="Cziepluch C."/>
            <person name="Daignan-Fornier B."/>
            <person name="Dang V.-D."/>
            <person name="de Haan M."/>
            <person name="Delius H."/>
            <person name="Durand P."/>
            <person name="Fairhead C."/>
            <person name="Feldmann H."/>
            <person name="Gaillon L."/>
            <person name="Galisson F."/>
            <person name="Gamo F.-J."/>
            <person name="Gancedo C."/>
            <person name="Goffeau A."/>
            <person name="Goulding S.E."/>
            <person name="Grivell L.A."/>
            <person name="Habbig B."/>
            <person name="Hand N.J."/>
            <person name="Hani J."/>
            <person name="Hattenhorst U."/>
            <person name="Hebling U."/>
            <person name="Hernando Y."/>
            <person name="Herrero E."/>
            <person name="Heumann K."/>
            <person name="Hiesel R."/>
            <person name="Hilger F."/>
            <person name="Hofmann B."/>
            <person name="Hollenberg C.P."/>
            <person name="Hughes B."/>
            <person name="Jauniaux J.-C."/>
            <person name="Kalogeropoulos A."/>
            <person name="Katsoulou C."/>
            <person name="Kordes E."/>
            <person name="Lafuente M.J."/>
            <person name="Landt O."/>
            <person name="Louis E.J."/>
            <person name="Maarse A.C."/>
            <person name="Madania A."/>
            <person name="Mannhaupt G."/>
            <person name="Marck C."/>
            <person name="Martin R.P."/>
            <person name="Mewes H.-W."/>
            <person name="Michaux G."/>
            <person name="Paces V."/>
            <person name="Parle-McDermott A.G."/>
            <person name="Pearson B.M."/>
            <person name="Perrin A."/>
            <person name="Pettersson B."/>
            <person name="Poch O."/>
            <person name="Pohl T.M."/>
            <person name="Poirey R."/>
            <person name="Portetelle D."/>
            <person name="Pujol A."/>
            <person name="Purnelle B."/>
            <person name="Ramezani Rad M."/>
            <person name="Rechmann S."/>
            <person name="Schwager C."/>
            <person name="Schweizer M."/>
            <person name="Sor F."/>
            <person name="Sterky F."/>
            <person name="Tarassov I.A."/>
            <person name="Teodoru C."/>
            <person name="Tettelin H."/>
            <person name="Thierry A."/>
            <person name="Tobiasch E."/>
            <person name="Tzermia M."/>
            <person name="Uhlen M."/>
            <person name="Unseld M."/>
            <person name="Valens M."/>
            <person name="Vandenbol M."/>
            <person name="Vetter I."/>
            <person name="Vlcek C."/>
            <person name="Voet M."/>
            <person name="Volckaert G."/>
            <person name="Voss H."/>
            <person name="Wambutt R."/>
            <person name="Wedler H."/>
            <person name="Wiemann S."/>
            <person name="Winsor B."/>
            <person name="Wolfe K.H."/>
            <person name="Zollner A."/>
            <person name="Zumstein E."/>
            <person name="Kleine K."/>
        </authorList>
    </citation>
    <scope>NUCLEOTIDE SEQUENCE [LARGE SCALE GENOMIC DNA]</scope>
    <source>
        <strain>ATCC 204508 / S288c</strain>
    </source>
</reference>
<reference key="2">
    <citation type="journal article" date="2014" name="G3 (Bethesda)">
        <title>The reference genome sequence of Saccharomyces cerevisiae: Then and now.</title>
        <authorList>
            <person name="Engel S.R."/>
            <person name="Dietrich F.S."/>
            <person name="Fisk D.G."/>
            <person name="Binkley G."/>
            <person name="Balakrishnan R."/>
            <person name="Costanzo M.C."/>
            <person name="Dwight S.S."/>
            <person name="Hitz B.C."/>
            <person name="Karra K."/>
            <person name="Nash R.S."/>
            <person name="Weng S."/>
            <person name="Wong E.D."/>
            <person name="Lloyd P."/>
            <person name="Skrzypek M.S."/>
            <person name="Miyasato S.R."/>
            <person name="Simison M."/>
            <person name="Cherry J.M."/>
        </authorList>
    </citation>
    <scope>GENOME REANNOTATION</scope>
    <source>
        <strain>ATCC 204508 / S288c</strain>
    </source>
</reference>
<reference key="3">
    <citation type="journal article" date="2000" name="Nucleic Acids Res.">
        <title>Test of intron predictions reveals novel splice sites, alternatively spliced mRNAs and new introns in meiotically regulated genes of yeast.</title>
        <authorList>
            <person name="Davis C.A."/>
            <person name="Grate L."/>
            <person name="Spingola M."/>
            <person name="Ares M. Jr."/>
        </authorList>
    </citation>
    <scope>REVISION OF GENE MODEL</scope>
</reference>
<reference key="4">
    <citation type="journal article" date="2003" name="Nature">
        <title>Global analysis of protein localization in budding yeast.</title>
        <authorList>
            <person name="Huh W.-K."/>
            <person name="Falvo J.V."/>
            <person name="Gerke L.C."/>
            <person name="Carroll A.S."/>
            <person name="Howson R.W."/>
            <person name="Weissman J.S."/>
            <person name="O'Shea E.K."/>
        </authorList>
    </citation>
    <scope>SUBCELLULAR LOCATION [LARGE SCALE ANALYSIS]</scope>
</reference>
<reference key="5">
    <citation type="journal article" date="2003" name="Nature">
        <title>Global analysis of protein expression in yeast.</title>
        <authorList>
            <person name="Ghaemmaghami S."/>
            <person name="Huh W.-K."/>
            <person name="Bower K."/>
            <person name="Howson R.W."/>
            <person name="Belle A."/>
            <person name="Dephoure N."/>
            <person name="O'Shea E.K."/>
            <person name="Weissman J.S."/>
        </authorList>
    </citation>
    <scope>LEVEL OF PROTEIN EXPRESSION [LARGE SCALE ANALYSIS]</scope>
</reference>
<reference key="6">
    <citation type="journal article" date="2013" name="PLoS Genet.">
        <title>A highly redundant gene network controls assembly of the outer spore wall in S. cerevisiae.</title>
        <authorList>
            <person name="Lin C.P."/>
            <person name="Kim C."/>
            <person name="Smith S.O."/>
            <person name="Neiman A.M."/>
        </authorList>
    </citation>
    <scope>FUNCTION</scope>
    <scope>SUBCELLULAR LOCATION</scope>
    <scope>DISRUPTION PHENOTYPE</scope>
</reference>
<reference key="7">
    <citation type="journal article" date="2014" name="Eukaryot. Cell">
        <title>A visual screen of protein localization during sporulation identifies new components of prospore membrane-associated complexes in budding yeast.</title>
        <authorList>
            <person name="Lam C."/>
            <person name="Santore E."/>
            <person name="Lavoie E."/>
            <person name="Needleman L."/>
            <person name="Fiacco N."/>
            <person name="Kim C."/>
            <person name="Neiman A.M."/>
        </authorList>
    </citation>
    <scope>SUBCELLULAR LOCATION</scope>
</reference>
<accession>Q08218</accession>
<accession>D6W220</accession>
<name>LDS2_YEAST</name>
<keyword id="KW-0551">Lipid droplet</keyword>
<keyword id="KW-0472">Membrane</keyword>
<keyword id="KW-1185">Reference proteome</keyword>
<keyword id="KW-0749">Sporulation</keyword>
<keyword id="KW-0812">Transmembrane</keyword>
<keyword id="KW-1133">Transmembrane helix</keyword>